<comment type="function">
    <text evidence="1">Probably catalyzes the hydrolysis of L-ascorbate-6-P into 3-keto-L-gulonate-6-P. Is essential for L-ascorbate utilization under anaerobic conditions.</text>
</comment>
<comment type="catalytic activity">
    <reaction evidence="1">
        <text>L-ascorbate 6-phosphate + H2O = 3-dehydro-L-gulonate 6-phosphate</text>
        <dbReference type="Rhea" id="RHEA:28803"/>
        <dbReference type="ChEBI" id="CHEBI:15377"/>
        <dbReference type="ChEBI" id="CHEBI:58774"/>
        <dbReference type="ChEBI" id="CHEBI:61698"/>
    </reaction>
</comment>
<comment type="cofactor">
    <cofactor evidence="1">
        <name>a divalent metal cation</name>
        <dbReference type="ChEBI" id="CHEBI:60240"/>
    </cofactor>
</comment>
<comment type="pathway">
    <text evidence="1">Cofactor degradation; L-ascorbate degradation; D-xylulose 5-phosphate from L-ascorbate: step 1/4.</text>
</comment>
<comment type="subcellular location">
    <subcellularLocation>
        <location evidence="1">Cytoplasm</location>
    </subcellularLocation>
</comment>
<comment type="induction">
    <text evidence="1">Induced by L-ascorbate. Repressed by UlaR.</text>
</comment>
<comment type="similarity">
    <text evidence="1">Belongs to the UlaG family.</text>
</comment>
<reference key="1">
    <citation type="submission" date="2008-05" db="EMBL/GenBank/DDBJ databases">
        <title>Complete sequence of Shigella boydii serotype 18 strain BS512.</title>
        <authorList>
            <person name="Rasko D.A."/>
            <person name="Rosovitz M."/>
            <person name="Maurelli A.T."/>
            <person name="Myers G."/>
            <person name="Seshadri R."/>
            <person name="Cer R."/>
            <person name="Jiang L."/>
            <person name="Ravel J."/>
            <person name="Sebastian Y."/>
        </authorList>
    </citation>
    <scope>NUCLEOTIDE SEQUENCE [LARGE SCALE GENOMIC DNA]</scope>
    <source>
        <strain>CDC 3083-94 / BS512</strain>
    </source>
</reference>
<accession>B2TY65</accession>
<gene>
    <name evidence="1" type="primary">ulaG</name>
    <name type="ordered locus">SbBS512_E4722</name>
</gene>
<protein>
    <recommendedName>
        <fullName evidence="1">Probable L-ascorbate-6-phosphate lactonase UlaG</fullName>
        <ecNumber evidence="1">3.1.1.-</ecNumber>
    </recommendedName>
    <alternativeName>
        <fullName evidence="1">L-ascorbate utilization protein G</fullName>
    </alternativeName>
</protein>
<keyword id="KW-0963">Cytoplasm</keyword>
<keyword id="KW-0378">Hydrolase</keyword>
<keyword id="KW-1185">Reference proteome</keyword>
<dbReference type="EC" id="3.1.1.-" evidence="1"/>
<dbReference type="EMBL" id="CP001063">
    <property type="protein sequence ID" value="ACD06962.1"/>
    <property type="molecule type" value="Genomic_DNA"/>
</dbReference>
<dbReference type="RefSeq" id="WP_012421297.1">
    <property type="nucleotide sequence ID" value="NC_010658.1"/>
</dbReference>
<dbReference type="SMR" id="B2TY65"/>
<dbReference type="STRING" id="344609.SbBS512_E4722"/>
<dbReference type="KEGG" id="sbc:SbBS512_E4722"/>
<dbReference type="HOGENOM" id="CLU_074775_0_0_6"/>
<dbReference type="UniPathway" id="UPA00263">
    <property type="reaction ID" value="UER00377"/>
</dbReference>
<dbReference type="Proteomes" id="UP000001030">
    <property type="component" value="Chromosome"/>
</dbReference>
<dbReference type="GO" id="GO:0005737">
    <property type="term" value="C:cytoplasm"/>
    <property type="evidence" value="ECO:0007669"/>
    <property type="project" value="UniProtKB-SubCell"/>
</dbReference>
<dbReference type="GO" id="GO:0035460">
    <property type="term" value="F:L-ascorbate 6-phosphate lactonase activity"/>
    <property type="evidence" value="ECO:0007669"/>
    <property type="project" value="InterPro"/>
</dbReference>
<dbReference type="GO" id="GO:0030145">
    <property type="term" value="F:manganese ion binding"/>
    <property type="evidence" value="ECO:0007669"/>
    <property type="project" value="InterPro"/>
</dbReference>
<dbReference type="GO" id="GO:0019854">
    <property type="term" value="P:L-ascorbic acid catabolic process"/>
    <property type="evidence" value="ECO:0007669"/>
    <property type="project" value="UniProtKB-UniRule"/>
</dbReference>
<dbReference type="CDD" id="cd16284">
    <property type="entry name" value="UlaG-like_MBL-fold"/>
    <property type="match status" value="1"/>
</dbReference>
<dbReference type="FunFam" id="3.60.15.10:FF:000004">
    <property type="entry name" value="Probable L-ascorbate-6-phosphate lactonase UlaG"/>
    <property type="match status" value="1"/>
</dbReference>
<dbReference type="Gene3D" id="3.60.15.10">
    <property type="entry name" value="Ribonuclease Z/Hydroxyacylglutathione hydrolase-like"/>
    <property type="match status" value="1"/>
</dbReference>
<dbReference type="HAMAP" id="MF_01266">
    <property type="entry name" value="UlaG"/>
    <property type="match status" value="1"/>
</dbReference>
<dbReference type="InterPro" id="IPR023951">
    <property type="entry name" value="L-ascorbate_6P_UlaG"/>
</dbReference>
<dbReference type="InterPro" id="IPR001279">
    <property type="entry name" value="Metallo-B-lactamas"/>
</dbReference>
<dbReference type="InterPro" id="IPR036866">
    <property type="entry name" value="RibonucZ/Hydroxyglut_hydro"/>
</dbReference>
<dbReference type="InterPro" id="IPR048021">
    <property type="entry name" value="UlaG-like_MBL-fold"/>
</dbReference>
<dbReference type="InterPro" id="IPR050114">
    <property type="entry name" value="UPF0173_UPF0282_UlaG_hydrolase"/>
</dbReference>
<dbReference type="NCBIfam" id="NF008688">
    <property type="entry name" value="PRK11709.1"/>
    <property type="match status" value="1"/>
</dbReference>
<dbReference type="PANTHER" id="PTHR43546:SF9">
    <property type="entry name" value="L-ASCORBATE-6-PHOSPHATE LACTONASE ULAG-RELATED"/>
    <property type="match status" value="1"/>
</dbReference>
<dbReference type="PANTHER" id="PTHR43546">
    <property type="entry name" value="UPF0173 METAL-DEPENDENT HYDROLASE MJ1163-RELATED"/>
    <property type="match status" value="1"/>
</dbReference>
<dbReference type="Pfam" id="PF12706">
    <property type="entry name" value="Lactamase_B_2"/>
    <property type="match status" value="1"/>
</dbReference>
<dbReference type="SUPFAM" id="SSF56281">
    <property type="entry name" value="Metallo-hydrolase/oxidoreductase"/>
    <property type="match status" value="1"/>
</dbReference>
<feature type="chain" id="PRO_1000140108" description="Probable L-ascorbate-6-phosphate lactonase UlaG">
    <location>
        <begin position="1"/>
        <end position="354"/>
    </location>
</feature>
<proteinExistence type="inferred from homology"/>
<sequence length="354" mass="39983">MSKVKSITRESWILSTFPEWGSWLNEEIEQEQVAPGTFAMWWLGCTGIWLKSEGGTNVCVDFWCGTGKQSHGNPLMKQGHQMQRMAGVKKLQPNLRTTPFVLDPFAIRQIDAVLATHDHNDHIDVNVAAAVMQNCADDVPFIGPKTCVDLWIGWGVPKERCIVVKPGDVVKVKDIEIHALDAFDRTALITLPADQKAAGVLPDGMDDRAVNYLFKTPGGSLYHSGDSHYSNYYAKHGNEHQIDVALGSYGENPRGITDKMTSADMLRMGEALNAKVVIPFHHDIWSNFQAAPQEIRVLWEMKKDRLKYGFKPFIWQVGGKFTWPLDKDNLEYHYPRGFDDCFTIEPDLPFKSFL</sequence>
<name>ULAG_SHIB3</name>
<evidence type="ECO:0000255" key="1">
    <source>
        <dbReference type="HAMAP-Rule" id="MF_01266"/>
    </source>
</evidence>
<organism>
    <name type="scientific">Shigella boydii serotype 18 (strain CDC 3083-94 / BS512)</name>
    <dbReference type="NCBI Taxonomy" id="344609"/>
    <lineage>
        <taxon>Bacteria</taxon>
        <taxon>Pseudomonadati</taxon>
        <taxon>Pseudomonadota</taxon>
        <taxon>Gammaproteobacteria</taxon>
        <taxon>Enterobacterales</taxon>
        <taxon>Enterobacteriaceae</taxon>
        <taxon>Shigella</taxon>
    </lineage>
</organism>